<sequence>MKTDIEIAQSIELKPIVDVVEKLGISYDDLELYGKYKAKLSFDKIRAVESNPVGKLILVTAINPTPAGEGKSTLTIGLADALNKIGKKTMIAIREPSLGPVMGIKGGAAGGGYAQVLPMEDINLHFTGDMHAITTANNALSALIDNHLHQGNELEIDQRRILWKRVVDLNDRALRHVTVGLGGPLNGIPREDGFDITVASEIMAILCLATDIEDLKRRLANIVIGYRYDRTPVSVGDLQVEGALALILKDAIKPNLVQTIYGTPAFVHGGPFANIAHGCNSVLATTTALHLADYTVTEAGFGADLGAEKFLDIKTPNLPTSPDAVVIVATLRALKMNGGVAKDALTEENVEAVRAGFANLKRHVENIRKFGIPAVVAINEFVSDTEAEIAVLKELCASIDVPVELASVWADGAEGGVALAETVVKTIAENPANYKRLYDNDLSVQEKIEKIVNEIYRGSKVNFEKKSQTQIAQIVQNGWDKLPICMAKTQYSFSDNPNALGAPENFEITIRELVPKLGAGFIVALTGDVMTMPGLPKRPAALNMDVESDGTVLGLF</sequence>
<keyword id="KW-0067">ATP-binding</keyword>
<keyword id="KW-0436">Ligase</keyword>
<keyword id="KW-0547">Nucleotide-binding</keyword>
<keyword id="KW-0554">One-carbon metabolism</keyword>
<evidence type="ECO:0000255" key="1">
    <source>
        <dbReference type="HAMAP-Rule" id="MF_01543"/>
    </source>
</evidence>
<proteinExistence type="inferred from homology"/>
<dbReference type="EC" id="6.3.4.3" evidence="1"/>
<dbReference type="EMBL" id="CP000936">
    <property type="protein sequence ID" value="ACA36998.1"/>
    <property type="molecule type" value="Genomic_DNA"/>
</dbReference>
<dbReference type="RefSeq" id="WP_000845274.1">
    <property type="nucleotide sequence ID" value="NC_010380.1"/>
</dbReference>
<dbReference type="SMR" id="B1IC26"/>
<dbReference type="KEGG" id="spv:SPH_1344"/>
<dbReference type="HOGENOM" id="CLU_003601_3_3_9"/>
<dbReference type="UniPathway" id="UPA00193"/>
<dbReference type="Proteomes" id="UP000002163">
    <property type="component" value="Chromosome"/>
</dbReference>
<dbReference type="GO" id="GO:0005524">
    <property type="term" value="F:ATP binding"/>
    <property type="evidence" value="ECO:0007669"/>
    <property type="project" value="UniProtKB-UniRule"/>
</dbReference>
<dbReference type="GO" id="GO:0004329">
    <property type="term" value="F:formate-tetrahydrofolate ligase activity"/>
    <property type="evidence" value="ECO:0007669"/>
    <property type="project" value="UniProtKB-UniRule"/>
</dbReference>
<dbReference type="GO" id="GO:0035999">
    <property type="term" value="P:tetrahydrofolate interconversion"/>
    <property type="evidence" value="ECO:0007669"/>
    <property type="project" value="UniProtKB-UniRule"/>
</dbReference>
<dbReference type="CDD" id="cd00477">
    <property type="entry name" value="FTHFS"/>
    <property type="match status" value="1"/>
</dbReference>
<dbReference type="FunFam" id="3.30.1510.10:FF:000001">
    <property type="entry name" value="Formate--tetrahydrofolate ligase"/>
    <property type="match status" value="1"/>
</dbReference>
<dbReference type="FunFam" id="3.10.410.10:FF:000001">
    <property type="entry name" value="Putative formate--tetrahydrofolate ligase"/>
    <property type="match status" value="1"/>
</dbReference>
<dbReference type="Gene3D" id="3.30.1510.10">
    <property type="entry name" value="Domain 2, N(10)-formyltetrahydrofolate synthetase"/>
    <property type="match status" value="1"/>
</dbReference>
<dbReference type="Gene3D" id="3.10.410.10">
    <property type="entry name" value="Formyltetrahydrofolate synthetase, domain 3"/>
    <property type="match status" value="1"/>
</dbReference>
<dbReference type="Gene3D" id="3.40.50.300">
    <property type="entry name" value="P-loop containing nucleotide triphosphate hydrolases"/>
    <property type="match status" value="1"/>
</dbReference>
<dbReference type="HAMAP" id="MF_01543">
    <property type="entry name" value="FTHFS"/>
    <property type="match status" value="1"/>
</dbReference>
<dbReference type="InterPro" id="IPR000559">
    <property type="entry name" value="Formate_THF_ligase"/>
</dbReference>
<dbReference type="InterPro" id="IPR020628">
    <property type="entry name" value="Formate_THF_ligase_CS"/>
</dbReference>
<dbReference type="InterPro" id="IPR027417">
    <property type="entry name" value="P-loop_NTPase"/>
</dbReference>
<dbReference type="NCBIfam" id="NF010030">
    <property type="entry name" value="PRK13505.1"/>
    <property type="match status" value="1"/>
</dbReference>
<dbReference type="Pfam" id="PF01268">
    <property type="entry name" value="FTHFS"/>
    <property type="match status" value="1"/>
</dbReference>
<dbReference type="SUPFAM" id="SSF52540">
    <property type="entry name" value="P-loop containing nucleoside triphosphate hydrolases"/>
    <property type="match status" value="1"/>
</dbReference>
<dbReference type="PROSITE" id="PS00721">
    <property type="entry name" value="FTHFS_1"/>
    <property type="match status" value="1"/>
</dbReference>
<dbReference type="PROSITE" id="PS00722">
    <property type="entry name" value="FTHFS_2"/>
    <property type="match status" value="1"/>
</dbReference>
<gene>
    <name evidence="1" type="primary">fhs</name>
    <name type="ordered locus">SPH_1344</name>
</gene>
<name>FTHS_STRPI</name>
<accession>B1IC26</accession>
<reference key="1">
    <citation type="journal article" date="2010" name="Genome Biol.">
        <title>Structure and dynamics of the pan-genome of Streptococcus pneumoniae and closely related species.</title>
        <authorList>
            <person name="Donati C."/>
            <person name="Hiller N.L."/>
            <person name="Tettelin H."/>
            <person name="Muzzi A."/>
            <person name="Croucher N.J."/>
            <person name="Angiuoli S.V."/>
            <person name="Oggioni M."/>
            <person name="Dunning Hotopp J.C."/>
            <person name="Hu F.Z."/>
            <person name="Riley D.R."/>
            <person name="Covacci A."/>
            <person name="Mitchell T.J."/>
            <person name="Bentley S.D."/>
            <person name="Kilian M."/>
            <person name="Ehrlich G.D."/>
            <person name="Rappuoli R."/>
            <person name="Moxon E.R."/>
            <person name="Masignani V."/>
        </authorList>
    </citation>
    <scope>NUCLEOTIDE SEQUENCE [LARGE SCALE GENOMIC DNA]</scope>
    <source>
        <strain>Hungary19A-6</strain>
    </source>
</reference>
<feature type="chain" id="PRO_1000196826" description="Formate--tetrahydrofolate ligase">
    <location>
        <begin position="1"/>
        <end position="556"/>
    </location>
</feature>
<feature type="binding site" evidence="1">
    <location>
        <begin position="65"/>
        <end position="72"/>
    </location>
    <ligand>
        <name>ATP</name>
        <dbReference type="ChEBI" id="CHEBI:30616"/>
    </ligand>
</feature>
<organism>
    <name type="scientific">Streptococcus pneumoniae (strain Hungary19A-6)</name>
    <dbReference type="NCBI Taxonomy" id="487214"/>
    <lineage>
        <taxon>Bacteria</taxon>
        <taxon>Bacillati</taxon>
        <taxon>Bacillota</taxon>
        <taxon>Bacilli</taxon>
        <taxon>Lactobacillales</taxon>
        <taxon>Streptococcaceae</taxon>
        <taxon>Streptococcus</taxon>
    </lineage>
</organism>
<protein>
    <recommendedName>
        <fullName evidence="1">Formate--tetrahydrofolate ligase</fullName>
        <ecNumber evidence="1">6.3.4.3</ecNumber>
    </recommendedName>
    <alternativeName>
        <fullName evidence="1">Formyltetrahydrofolate synthetase</fullName>
        <shortName evidence="1">FHS</shortName>
        <shortName evidence="1">FTHFS</shortName>
    </alternativeName>
</protein>
<comment type="catalytic activity">
    <reaction evidence="1">
        <text>(6S)-5,6,7,8-tetrahydrofolate + formate + ATP = (6R)-10-formyltetrahydrofolate + ADP + phosphate</text>
        <dbReference type="Rhea" id="RHEA:20221"/>
        <dbReference type="ChEBI" id="CHEBI:15740"/>
        <dbReference type="ChEBI" id="CHEBI:30616"/>
        <dbReference type="ChEBI" id="CHEBI:43474"/>
        <dbReference type="ChEBI" id="CHEBI:57453"/>
        <dbReference type="ChEBI" id="CHEBI:195366"/>
        <dbReference type="ChEBI" id="CHEBI:456216"/>
        <dbReference type="EC" id="6.3.4.3"/>
    </reaction>
</comment>
<comment type="pathway">
    <text evidence="1">One-carbon metabolism; tetrahydrofolate interconversion.</text>
</comment>
<comment type="similarity">
    <text evidence="1">Belongs to the formate--tetrahydrofolate ligase family.</text>
</comment>